<name>PRIL_METKA</name>
<accession>Q8TVJ5</accession>
<keyword id="KW-0004">4Fe-4S</keyword>
<keyword id="KW-0235">DNA replication</keyword>
<keyword id="KW-0408">Iron</keyword>
<keyword id="KW-0411">Iron-sulfur</keyword>
<keyword id="KW-0479">Metal-binding</keyword>
<keyword id="KW-0639">Primosome</keyword>
<keyword id="KW-1185">Reference proteome</keyword>
<feature type="chain" id="PRO_0000046781" description="DNA primase large subunit PriL">
    <location>
        <begin position="1"/>
        <end position="406"/>
    </location>
</feature>
<feature type="binding site" evidence="1">
    <location>
        <position position="302"/>
    </location>
    <ligand>
        <name>[4Fe-4S] cluster</name>
        <dbReference type="ChEBI" id="CHEBI:49883"/>
    </ligand>
</feature>
<feature type="binding site" evidence="1">
    <location>
        <position position="375"/>
    </location>
    <ligand>
        <name>[4Fe-4S] cluster</name>
        <dbReference type="ChEBI" id="CHEBI:49883"/>
    </ligand>
</feature>
<feature type="binding site" evidence="1">
    <location>
        <position position="384"/>
    </location>
    <ligand>
        <name>[4Fe-4S] cluster</name>
        <dbReference type="ChEBI" id="CHEBI:49883"/>
    </ligand>
</feature>
<feature type="binding site" evidence="1">
    <location>
        <position position="389"/>
    </location>
    <ligand>
        <name>[4Fe-4S] cluster</name>
        <dbReference type="ChEBI" id="CHEBI:49883"/>
    </ligand>
</feature>
<evidence type="ECO:0000255" key="1">
    <source>
        <dbReference type="HAMAP-Rule" id="MF_00701"/>
    </source>
</evidence>
<proteinExistence type="inferred from homology"/>
<gene>
    <name evidence="1" type="primary">priL</name>
    <name type="synonym">pri2</name>
    <name type="synonym">priB</name>
    <name type="ordered locus">MK1394</name>
</gene>
<protein>
    <recommendedName>
        <fullName evidence="1">DNA primase large subunit PriL</fullName>
    </recommendedName>
</protein>
<sequence>MRSWFPHAPTVSVPEIEPEEALSYRDEIRTRVRSYAFGLDDWRAKVKTRRAYLRKVRDEDESEILRVYGALLTVAAAGPRPVRHLIAEGESAMAETALYALRHEDESAMSYPEERVLSDLYLWDVRVLERDLGLYAVHFSFPLIHRSPEGQKLKVLVWERASLEKVLKEVRSNRVLGVRVLDPSGWNDVWICPRCGATRRGGTGDLEQDHARRCSNCRGRMRKPDPNLLEMLKEPEGYLIMHFKTLARTFREDVRRLVVSDIESRDDVEDEELREFCLKLFPKVRKRLERVEKGAGGRFPPCIRELLRRAQEGENLPHEARFALAAFLVNVGWDVDRVVEVFSNLPDFDEERTQYQVRHIAGEVGGGTRYLPPNCDKMKAWGLCPGKDCGVKNPLAYYRRPRADDG</sequence>
<dbReference type="EMBL" id="AE009439">
    <property type="protein sequence ID" value="AAM02607.1"/>
    <property type="molecule type" value="Genomic_DNA"/>
</dbReference>
<dbReference type="RefSeq" id="WP_011019762.1">
    <property type="nucleotide sequence ID" value="NC_003551.1"/>
</dbReference>
<dbReference type="SMR" id="Q8TVJ5"/>
<dbReference type="STRING" id="190192.MK1394"/>
<dbReference type="PaxDb" id="190192-MK1394"/>
<dbReference type="EnsemblBacteria" id="AAM02607">
    <property type="protein sequence ID" value="AAM02607"/>
    <property type="gene ID" value="MK1394"/>
</dbReference>
<dbReference type="GeneID" id="1477989"/>
<dbReference type="KEGG" id="mka:MK1394"/>
<dbReference type="HOGENOM" id="CLU_677258_0_0_2"/>
<dbReference type="InParanoid" id="Q8TVJ5"/>
<dbReference type="OrthoDB" id="46081at2157"/>
<dbReference type="Proteomes" id="UP000001826">
    <property type="component" value="Chromosome"/>
</dbReference>
<dbReference type="GO" id="GO:1990077">
    <property type="term" value="C:primosome complex"/>
    <property type="evidence" value="ECO:0007669"/>
    <property type="project" value="UniProtKB-KW"/>
</dbReference>
<dbReference type="GO" id="GO:0051539">
    <property type="term" value="F:4 iron, 4 sulfur cluster binding"/>
    <property type="evidence" value="ECO:0007669"/>
    <property type="project" value="UniProtKB-UniRule"/>
</dbReference>
<dbReference type="GO" id="GO:0003899">
    <property type="term" value="F:DNA-directed RNA polymerase activity"/>
    <property type="evidence" value="ECO:0007669"/>
    <property type="project" value="InterPro"/>
</dbReference>
<dbReference type="GO" id="GO:0046872">
    <property type="term" value="F:metal ion binding"/>
    <property type="evidence" value="ECO:0007669"/>
    <property type="project" value="UniProtKB-KW"/>
</dbReference>
<dbReference type="GO" id="GO:0006270">
    <property type="term" value="P:DNA replication initiation"/>
    <property type="evidence" value="ECO:0007669"/>
    <property type="project" value="TreeGrafter"/>
</dbReference>
<dbReference type="GO" id="GO:0006269">
    <property type="term" value="P:DNA replication, synthesis of primer"/>
    <property type="evidence" value="ECO:0007669"/>
    <property type="project" value="UniProtKB-UniRule"/>
</dbReference>
<dbReference type="HAMAP" id="MF_00701">
    <property type="entry name" value="DNA_primase_lrg_arc"/>
    <property type="match status" value="1"/>
</dbReference>
<dbReference type="InterPro" id="IPR007238">
    <property type="entry name" value="DNA_primase_lsu_euk/arc"/>
</dbReference>
<dbReference type="InterPro" id="IPR023642">
    <property type="entry name" value="DNA_primase_lsu_PriL"/>
</dbReference>
<dbReference type="NCBIfam" id="NF002589">
    <property type="entry name" value="PRK02249.1-3"/>
    <property type="match status" value="1"/>
</dbReference>
<dbReference type="PANTHER" id="PTHR10537">
    <property type="entry name" value="DNA PRIMASE LARGE SUBUNIT"/>
    <property type="match status" value="1"/>
</dbReference>
<dbReference type="PANTHER" id="PTHR10537:SF3">
    <property type="entry name" value="DNA PRIMASE LARGE SUBUNIT"/>
    <property type="match status" value="1"/>
</dbReference>
<dbReference type="Pfam" id="PF04104">
    <property type="entry name" value="DNA_primase_lrg"/>
    <property type="match status" value="1"/>
</dbReference>
<comment type="function">
    <text evidence="1">Regulatory subunit of DNA primase, an RNA polymerase that catalyzes the synthesis of short RNA molecules used as primers for DNA polymerase during DNA replication. Stabilizes and modulates the activity of the small subunit, increasing the rate of DNA synthesis, and conferring RNA synthesis capability. The DNA polymerase activity may enable DNA primase to also catalyze primer extension after primer synthesis. May also play a role in DNA repair.</text>
</comment>
<comment type="cofactor">
    <cofactor evidence="1">
        <name>[4Fe-4S] cluster</name>
        <dbReference type="ChEBI" id="CHEBI:49883"/>
    </cofactor>
    <text evidence="1">Binds 1 [4Fe-4S] cluster.</text>
</comment>
<comment type="subunit">
    <text evidence="1">Heterodimer of a small subunit (PriS) and a large subunit (PriL).</text>
</comment>
<comment type="similarity">
    <text evidence="1">Belongs to the eukaryotic-type primase large subunit family.</text>
</comment>
<organism>
    <name type="scientific">Methanopyrus kandleri (strain AV19 / DSM 6324 / JCM 9639 / NBRC 100938)</name>
    <dbReference type="NCBI Taxonomy" id="190192"/>
    <lineage>
        <taxon>Archaea</taxon>
        <taxon>Methanobacteriati</taxon>
        <taxon>Methanobacteriota</taxon>
        <taxon>Methanomada group</taxon>
        <taxon>Methanopyri</taxon>
        <taxon>Methanopyrales</taxon>
        <taxon>Methanopyraceae</taxon>
        <taxon>Methanopyrus</taxon>
    </lineage>
</organism>
<reference key="1">
    <citation type="journal article" date="2002" name="Proc. Natl. Acad. Sci. U.S.A.">
        <title>The complete genome of hyperthermophile Methanopyrus kandleri AV19 and monophyly of archaeal methanogens.</title>
        <authorList>
            <person name="Slesarev A.I."/>
            <person name="Mezhevaya K.V."/>
            <person name="Makarova K.S."/>
            <person name="Polushin N.N."/>
            <person name="Shcherbinina O.V."/>
            <person name="Shakhova V.V."/>
            <person name="Belova G.I."/>
            <person name="Aravind L."/>
            <person name="Natale D.A."/>
            <person name="Rogozin I.B."/>
            <person name="Tatusov R.L."/>
            <person name="Wolf Y.I."/>
            <person name="Stetter K.O."/>
            <person name="Malykh A.G."/>
            <person name="Koonin E.V."/>
            <person name="Kozyavkin S.A."/>
        </authorList>
    </citation>
    <scope>NUCLEOTIDE SEQUENCE [LARGE SCALE GENOMIC DNA]</scope>
    <source>
        <strain>AV19 / DSM 6324 / JCM 9639 / NBRC 100938</strain>
    </source>
</reference>